<keyword id="KW-0025">Alternative splicing</keyword>
<keyword id="KW-1003">Cell membrane</keyword>
<keyword id="KW-0256">Endoplasmic reticulum</keyword>
<keyword id="KW-0472">Membrane</keyword>
<keyword id="KW-1185">Reference proteome</keyword>
<keyword id="KW-0812">Transmembrane</keyword>
<keyword id="KW-1133">Transmembrane helix</keyword>
<protein>
    <recommendedName>
        <fullName evidence="6">BOS complex subunit TMEM147</fullName>
    </recommendedName>
    <alternativeName>
        <fullName evidence="6">Transmembrane protein 147</fullName>
    </alternativeName>
</protein>
<sequence>MTLFHFGNCFALAYFPYFITYKCSGLSEYNAFWRCVQAGATYLCVQLCKMLFLATFFPTWEGAVGAYDFIGEFMKATVDLADLLGLHLVMSRNAGKGEYKIMVAAMGWATAELVMSRCLPLWVGARGIEFDWKYIQMSIDSNISLVHYMAVAALVWMWTRYDLPTHYRLPVTVLLGLSMYKAFLMDCFVHIFIMGSWTALLLKAVITGVLSLSCLTLFVSLVHGN</sequence>
<gene>
    <name type="primary">tmem147</name>
    <name type="ORF">TGas054a07.1</name>
</gene>
<dbReference type="EMBL" id="CR761674">
    <property type="protein sequence ID" value="CAJ81993.1"/>
    <property type="molecule type" value="mRNA"/>
</dbReference>
<dbReference type="EMBL" id="BC076688">
    <property type="protein sequence ID" value="AAH76688.1"/>
    <property type="molecule type" value="mRNA"/>
</dbReference>
<dbReference type="RefSeq" id="NP_001005017.1">
    <molecule id="Q28FY5-2"/>
    <property type="nucleotide sequence ID" value="NM_001005017.1"/>
</dbReference>
<dbReference type="RefSeq" id="XP_031760858.1">
    <molecule id="Q28FY5-1"/>
    <property type="nucleotide sequence ID" value="XM_031904998.1"/>
</dbReference>
<dbReference type="SMR" id="Q28FY5"/>
<dbReference type="FunCoup" id="Q28FY5">
    <property type="interactions" value="1118"/>
</dbReference>
<dbReference type="PaxDb" id="8364-ENSXETP00000014925"/>
<dbReference type="DNASU" id="448523"/>
<dbReference type="GeneID" id="448523"/>
<dbReference type="KEGG" id="xtr:448523"/>
<dbReference type="CTD" id="10430"/>
<dbReference type="Xenbase" id="XB-GENE-970269">
    <property type="gene designation" value="tmem147"/>
</dbReference>
<dbReference type="eggNOG" id="KOG3236">
    <property type="taxonomic scope" value="Eukaryota"/>
</dbReference>
<dbReference type="InParanoid" id="Q28FY5"/>
<dbReference type="OMA" id="SKCVYAG"/>
<dbReference type="OrthoDB" id="9993532at2759"/>
<dbReference type="Proteomes" id="UP000008143">
    <property type="component" value="Chromosome 7"/>
</dbReference>
<dbReference type="GO" id="GO:0005789">
    <property type="term" value="C:endoplasmic reticulum membrane"/>
    <property type="evidence" value="ECO:0000250"/>
    <property type="project" value="UniProtKB"/>
</dbReference>
<dbReference type="GO" id="GO:0031965">
    <property type="term" value="C:nuclear membrane"/>
    <property type="evidence" value="ECO:0000250"/>
    <property type="project" value="UniProtKB"/>
</dbReference>
<dbReference type="GO" id="GO:0005886">
    <property type="term" value="C:plasma membrane"/>
    <property type="evidence" value="ECO:0000250"/>
    <property type="project" value="UniProtKB"/>
</dbReference>
<dbReference type="GO" id="GO:0043022">
    <property type="term" value="F:ribosome binding"/>
    <property type="evidence" value="ECO:0000250"/>
    <property type="project" value="UniProtKB"/>
</dbReference>
<dbReference type="GO" id="GO:0160063">
    <property type="term" value="P:multi-pass transmembrane protein insertion into ER membrane"/>
    <property type="evidence" value="ECO:0000250"/>
    <property type="project" value="UniProtKB"/>
</dbReference>
<dbReference type="GO" id="GO:0036228">
    <property type="term" value="P:protein localization to nuclear inner membrane"/>
    <property type="evidence" value="ECO:0000250"/>
    <property type="project" value="UniProtKB"/>
</dbReference>
<dbReference type="InterPro" id="IPR019164">
    <property type="entry name" value="TMEM147"/>
</dbReference>
<dbReference type="PANTHER" id="PTHR12869:SF0">
    <property type="entry name" value="BOS COMPLEX SUBUNIT TMEM147"/>
    <property type="match status" value="1"/>
</dbReference>
<dbReference type="PANTHER" id="PTHR12869">
    <property type="entry name" value="SMALL SEVEN TRANSMEMBRANE DOMAIN-CONTAINING PROTEIN"/>
    <property type="match status" value="1"/>
</dbReference>
<dbReference type="Pfam" id="PF09767">
    <property type="entry name" value="DUF2053"/>
    <property type="match status" value="1"/>
</dbReference>
<proteinExistence type="evidence at transcript level"/>
<organism>
    <name type="scientific">Xenopus tropicalis</name>
    <name type="common">Western clawed frog</name>
    <name type="synonym">Silurana tropicalis</name>
    <dbReference type="NCBI Taxonomy" id="8364"/>
    <lineage>
        <taxon>Eukaryota</taxon>
        <taxon>Metazoa</taxon>
        <taxon>Chordata</taxon>
        <taxon>Craniata</taxon>
        <taxon>Vertebrata</taxon>
        <taxon>Euteleostomi</taxon>
        <taxon>Amphibia</taxon>
        <taxon>Batrachia</taxon>
        <taxon>Anura</taxon>
        <taxon>Pipoidea</taxon>
        <taxon>Pipidae</taxon>
        <taxon>Xenopodinae</taxon>
        <taxon>Xenopus</taxon>
        <taxon>Silurana</taxon>
    </lineage>
</organism>
<feature type="chain" id="PRO_0000271706" description="BOS complex subunit TMEM147">
    <location>
        <begin position="1"/>
        <end position="225"/>
    </location>
</feature>
<feature type="transmembrane region" description="Helical" evidence="1">
    <location>
        <begin position="1"/>
        <end position="21"/>
    </location>
</feature>
<feature type="topological domain" description="Cytoplasmic" evidence="1">
    <location>
        <begin position="22"/>
        <end position="34"/>
    </location>
</feature>
<feature type="transmembrane region" description="Helical" evidence="1">
    <location>
        <begin position="35"/>
        <end position="58"/>
    </location>
</feature>
<feature type="topological domain" description="Lumenal" evidence="1">
    <location>
        <begin position="59"/>
        <end position="68"/>
    </location>
</feature>
<feature type="transmembrane region" description="Helical" evidence="1">
    <location>
        <begin position="69"/>
        <end position="90"/>
    </location>
</feature>
<feature type="topological domain" description="Cytoplasmic" evidence="1">
    <location>
        <begin position="91"/>
        <end position="100"/>
    </location>
</feature>
<feature type="transmembrane region" description="Helical" evidence="1">
    <location>
        <begin position="101"/>
        <end position="126"/>
    </location>
</feature>
<feature type="topological domain" description="Lumenal" evidence="1">
    <location>
        <begin position="127"/>
        <end position="131"/>
    </location>
</feature>
<feature type="transmembrane region" description="Helical" evidence="1">
    <location>
        <begin position="132"/>
        <end position="157"/>
    </location>
</feature>
<feature type="topological domain" description="Cytoplasmic" evidence="1">
    <location>
        <begin position="158"/>
        <end position="166"/>
    </location>
</feature>
<feature type="transmembrane region" description="Helical" evidence="1">
    <location>
        <begin position="167"/>
        <end position="189"/>
    </location>
</feature>
<feature type="topological domain" description="Lumenal" evidence="1">
    <location>
        <begin position="190"/>
        <end position="196"/>
    </location>
</feature>
<feature type="transmembrane region" description="Helical" evidence="1">
    <location>
        <begin position="197"/>
        <end position="218"/>
    </location>
</feature>
<feature type="topological domain" description="Cytoplasmic" evidence="1">
    <location>
        <begin position="219"/>
        <end position="225"/>
    </location>
</feature>
<feature type="splice variant" id="VSP_022330" description="In isoform 2." evidence="5">
    <location>
        <begin position="1"/>
        <end position="49"/>
    </location>
</feature>
<evidence type="ECO:0000250" key="1">
    <source>
        <dbReference type="UniProtKB" id="A0A8I3MKU8"/>
    </source>
</evidence>
<evidence type="ECO:0000250" key="2">
    <source>
        <dbReference type="UniProtKB" id="I6VSD2"/>
    </source>
</evidence>
<evidence type="ECO:0000250" key="3">
    <source>
        <dbReference type="UniProtKB" id="Q9BVK8"/>
    </source>
</evidence>
<evidence type="ECO:0000255" key="4"/>
<evidence type="ECO:0000303" key="5">
    <source ref="2"/>
</evidence>
<evidence type="ECO:0000305" key="6"/>
<name>TM147_XENTR</name>
<accession>Q28FY5</accession>
<accession>Q6DFP6</accession>
<comment type="function">
    <text evidence="3">Component of the multi-pass translocon (MPT) complex that mediates insertion of multi-pass membrane proteins into the lipid bilayer of membranes. The MPT complex takes over after the SEC61 complex: following membrane insertion of the first few transmembrane segments of proteins by the SEC61 complex, the MPT complex occludes the lateral gate of the SEC61 complex to promote insertion of subsequent transmembrane regions.</text>
</comment>
<comment type="subunit">
    <text evidence="3">Component of the multi-pass translocon (MPT) complex.</text>
</comment>
<comment type="subcellular location">
    <subcellularLocation>
        <location evidence="3">Endoplasmic reticulum membrane</location>
        <topology evidence="4">Multi-pass membrane protein</topology>
    </subcellularLocation>
    <subcellularLocation>
        <location evidence="2">Cell membrane</location>
        <topology evidence="4">Multi-pass membrane protein</topology>
    </subcellularLocation>
</comment>
<comment type="alternative products">
    <event type="alternative splicing"/>
    <isoform>
        <id>Q28FY5-1</id>
        <name>1</name>
        <sequence type="displayed"/>
    </isoform>
    <isoform>
        <id>Q28FY5-2</id>
        <name>2</name>
        <sequence type="described" ref="VSP_022330"/>
    </isoform>
</comment>
<comment type="similarity">
    <text evidence="6">Belongs to the TMEM147 family.</text>
</comment>
<reference key="1">
    <citation type="submission" date="2006-10" db="EMBL/GenBank/DDBJ databases">
        <authorList>
            <consortium name="Sanger Xenopus tropicalis EST/cDNA project"/>
        </authorList>
    </citation>
    <scope>NUCLEOTIDE SEQUENCE [LARGE SCALE MRNA] (ISOFORM 1)</scope>
    <source>
        <tissue>Gastrula</tissue>
    </source>
</reference>
<reference key="2">
    <citation type="submission" date="2004-09" db="EMBL/GenBank/DDBJ databases">
        <authorList>
            <consortium name="NIH - Xenopus Gene Collection (XGC) project"/>
        </authorList>
    </citation>
    <scope>NUCLEOTIDE SEQUENCE [LARGE SCALE MRNA] (ISOFORM 2)</scope>
    <source>
        <tissue>Embryo</tissue>
    </source>
</reference>